<gene>
    <name type="primary">yqgI</name>
    <name type="synonym">yzmD</name>
    <name type="ordered locus">BSU24970</name>
</gene>
<evidence type="ECO:0000250" key="1"/>
<evidence type="ECO:0000255" key="2">
    <source>
        <dbReference type="PROSITE-ProRule" id="PRU00441"/>
    </source>
</evidence>
<evidence type="ECO:0000305" key="3"/>
<proteinExistence type="inferred from homology"/>
<protein>
    <recommendedName>
        <fullName>Probable ABC transporter permease protein YqgI</fullName>
    </recommendedName>
</protein>
<reference key="1">
    <citation type="journal article" date="1996" name="Microbiology">
        <title>A Bacillus subtilis gene cluster similar to the Escherichia coli phosphate-specific transport (pst) operon: evidence for a tandemly arranged pstB gene.</title>
        <authorList>
            <person name="Takemaru K."/>
            <person name="Mizuno M."/>
            <person name="Kobayashi Y."/>
        </authorList>
    </citation>
    <scope>NUCLEOTIDE SEQUENCE [GENOMIC DNA]</scope>
    <source>
        <strain>168 / JH642</strain>
    </source>
</reference>
<reference key="2">
    <citation type="journal article" date="1996" name="Microbiology">
        <title>Systematic sequencing of the 283 kb 210 degrees-232 degrees region of the Bacillus subtilis genome containing the skin element and many sporulation genes.</title>
        <authorList>
            <person name="Mizuno M."/>
            <person name="Masuda S."/>
            <person name="Takemaru K."/>
            <person name="Hosono S."/>
            <person name="Sato T."/>
            <person name="Takeuchi M."/>
            <person name="Kobayashi Y."/>
        </authorList>
    </citation>
    <scope>NUCLEOTIDE SEQUENCE [GENOMIC DNA]</scope>
    <source>
        <strain>168 / JH642</strain>
    </source>
</reference>
<reference key="3">
    <citation type="journal article" date="1997" name="Nature">
        <title>The complete genome sequence of the Gram-positive bacterium Bacillus subtilis.</title>
        <authorList>
            <person name="Kunst F."/>
            <person name="Ogasawara N."/>
            <person name="Moszer I."/>
            <person name="Albertini A.M."/>
            <person name="Alloni G."/>
            <person name="Azevedo V."/>
            <person name="Bertero M.G."/>
            <person name="Bessieres P."/>
            <person name="Bolotin A."/>
            <person name="Borchert S."/>
            <person name="Borriss R."/>
            <person name="Boursier L."/>
            <person name="Brans A."/>
            <person name="Braun M."/>
            <person name="Brignell S.C."/>
            <person name="Bron S."/>
            <person name="Brouillet S."/>
            <person name="Bruschi C.V."/>
            <person name="Caldwell B."/>
            <person name="Capuano V."/>
            <person name="Carter N.M."/>
            <person name="Choi S.-K."/>
            <person name="Codani J.-J."/>
            <person name="Connerton I.F."/>
            <person name="Cummings N.J."/>
            <person name="Daniel R.A."/>
            <person name="Denizot F."/>
            <person name="Devine K.M."/>
            <person name="Duesterhoeft A."/>
            <person name="Ehrlich S.D."/>
            <person name="Emmerson P.T."/>
            <person name="Entian K.-D."/>
            <person name="Errington J."/>
            <person name="Fabret C."/>
            <person name="Ferrari E."/>
            <person name="Foulger D."/>
            <person name="Fritz C."/>
            <person name="Fujita M."/>
            <person name="Fujita Y."/>
            <person name="Fuma S."/>
            <person name="Galizzi A."/>
            <person name="Galleron N."/>
            <person name="Ghim S.-Y."/>
            <person name="Glaser P."/>
            <person name="Goffeau A."/>
            <person name="Golightly E.J."/>
            <person name="Grandi G."/>
            <person name="Guiseppi G."/>
            <person name="Guy B.J."/>
            <person name="Haga K."/>
            <person name="Haiech J."/>
            <person name="Harwood C.R."/>
            <person name="Henaut A."/>
            <person name="Hilbert H."/>
            <person name="Holsappel S."/>
            <person name="Hosono S."/>
            <person name="Hullo M.-F."/>
            <person name="Itaya M."/>
            <person name="Jones L.-M."/>
            <person name="Joris B."/>
            <person name="Karamata D."/>
            <person name="Kasahara Y."/>
            <person name="Klaerr-Blanchard M."/>
            <person name="Klein C."/>
            <person name="Kobayashi Y."/>
            <person name="Koetter P."/>
            <person name="Koningstein G."/>
            <person name="Krogh S."/>
            <person name="Kumano M."/>
            <person name="Kurita K."/>
            <person name="Lapidus A."/>
            <person name="Lardinois S."/>
            <person name="Lauber J."/>
            <person name="Lazarevic V."/>
            <person name="Lee S.-M."/>
            <person name="Levine A."/>
            <person name="Liu H."/>
            <person name="Masuda S."/>
            <person name="Mauel C."/>
            <person name="Medigue C."/>
            <person name="Medina N."/>
            <person name="Mellado R.P."/>
            <person name="Mizuno M."/>
            <person name="Moestl D."/>
            <person name="Nakai S."/>
            <person name="Noback M."/>
            <person name="Noone D."/>
            <person name="O'Reilly M."/>
            <person name="Ogawa K."/>
            <person name="Ogiwara A."/>
            <person name="Oudega B."/>
            <person name="Park S.-H."/>
            <person name="Parro V."/>
            <person name="Pohl T.M."/>
            <person name="Portetelle D."/>
            <person name="Porwollik S."/>
            <person name="Prescott A.M."/>
            <person name="Presecan E."/>
            <person name="Pujic P."/>
            <person name="Purnelle B."/>
            <person name="Rapoport G."/>
            <person name="Rey M."/>
            <person name="Reynolds S."/>
            <person name="Rieger M."/>
            <person name="Rivolta C."/>
            <person name="Rocha E."/>
            <person name="Roche B."/>
            <person name="Rose M."/>
            <person name="Sadaie Y."/>
            <person name="Sato T."/>
            <person name="Scanlan E."/>
            <person name="Schleich S."/>
            <person name="Schroeter R."/>
            <person name="Scoffone F."/>
            <person name="Sekiguchi J."/>
            <person name="Sekowska A."/>
            <person name="Seror S.J."/>
            <person name="Serror P."/>
            <person name="Shin B.-S."/>
            <person name="Soldo B."/>
            <person name="Sorokin A."/>
            <person name="Tacconi E."/>
            <person name="Takagi T."/>
            <person name="Takahashi H."/>
            <person name="Takemaru K."/>
            <person name="Takeuchi M."/>
            <person name="Tamakoshi A."/>
            <person name="Tanaka T."/>
            <person name="Terpstra P."/>
            <person name="Tognoni A."/>
            <person name="Tosato V."/>
            <person name="Uchiyama S."/>
            <person name="Vandenbol M."/>
            <person name="Vannier F."/>
            <person name="Vassarotti A."/>
            <person name="Viari A."/>
            <person name="Wambutt R."/>
            <person name="Wedler E."/>
            <person name="Wedler H."/>
            <person name="Weitzenegger T."/>
            <person name="Winters P."/>
            <person name="Wipat A."/>
            <person name="Yamamoto H."/>
            <person name="Yamane K."/>
            <person name="Yasumoto K."/>
            <person name="Yata K."/>
            <person name="Yoshida K."/>
            <person name="Yoshikawa H.-F."/>
            <person name="Zumstein E."/>
            <person name="Yoshikawa H."/>
            <person name="Danchin A."/>
        </authorList>
    </citation>
    <scope>NUCLEOTIDE SEQUENCE [LARGE SCALE GENOMIC DNA]</scope>
    <source>
        <strain>168</strain>
    </source>
</reference>
<reference key="4">
    <citation type="journal article" date="2009" name="Microbiology">
        <title>From a consortium sequence to a unified sequence: the Bacillus subtilis 168 reference genome a decade later.</title>
        <authorList>
            <person name="Barbe V."/>
            <person name="Cruveiller S."/>
            <person name="Kunst F."/>
            <person name="Lenoble P."/>
            <person name="Meurice G."/>
            <person name="Sekowska A."/>
            <person name="Vallenet D."/>
            <person name="Wang T."/>
            <person name="Moszer I."/>
            <person name="Medigue C."/>
            <person name="Danchin A."/>
        </authorList>
    </citation>
    <scope>SEQUENCE REVISION TO 267</scope>
</reference>
<comment type="function">
    <text evidence="1">Part of the binding-protein-dependent transport system YqgGHIJK. Probably responsible for the translocation of the substrate across the membrane (By similarity).</text>
</comment>
<comment type="subcellular location">
    <subcellularLocation>
        <location>Cell membrane</location>
        <topology>Multi-pass membrane protein</topology>
    </subcellularLocation>
</comment>
<comment type="similarity">
    <text evidence="3">Belongs to the binding-protein-dependent transport system permease family. CysTW subfamily.</text>
</comment>
<feature type="chain" id="PRO_0000060272" description="Probable ABC transporter permease protein YqgI">
    <location>
        <begin position="1"/>
        <end position="294"/>
    </location>
</feature>
<feature type="transmembrane region" description="Helical" evidence="2">
    <location>
        <begin position="14"/>
        <end position="34"/>
    </location>
</feature>
<feature type="transmembrane region" description="Helical" evidence="2">
    <location>
        <begin position="66"/>
        <end position="86"/>
    </location>
</feature>
<feature type="transmembrane region" description="Helical" evidence="2">
    <location>
        <begin position="99"/>
        <end position="121"/>
    </location>
</feature>
<feature type="transmembrane region" description="Helical" evidence="2">
    <location>
        <begin position="126"/>
        <end position="148"/>
    </location>
</feature>
<feature type="transmembrane region" description="Helical" evidence="2">
    <location>
        <begin position="190"/>
        <end position="210"/>
    </location>
</feature>
<feature type="transmembrane region" description="Helical" evidence="2">
    <location>
        <begin position="260"/>
        <end position="280"/>
    </location>
</feature>
<feature type="domain" description="ABC transmembrane type-1" evidence="2">
    <location>
        <begin position="62"/>
        <end position="280"/>
    </location>
</feature>
<feature type="sequence conflict" description="In Ref. 1; BAA09583 and 2; BAA12512." evidence="3" ref="1 2">
    <original>A</original>
    <variation>P</variation>
    <location>
        <position position="267"/>
    </location>
</feature>
<accession>P46340</accession>
<organism>
    <name type="scientific">Bacillus subtilis (strain 168)</name>
    <dbReference type="NCBI Taxonomy" id="224308"/>
    <lineage>
        <taxon>Bacteria</taxon>
        <taxon>Bacillati</taxon>
        <taxon>Bacillota</taxon>
        <taxon>Bacilli</taxon>
        <taxon>Bacillales</taxon>
        <taxon>Bacillaceae</taxon>
        <taxon>Bacillus</taxon>
    </lineage>
</organism>
<name>YQGI_BACSU</name>
<keyword id="KW-1003">Cell membrane</keyword>
<keyword id="KW-0472">Membrane</keyword>
<keyword id="KW-1185">Reference proteome</keyword>
<keyword id="KW-0812">Transmembrane</keyword>
<keyword id="KW-1133">Transmembrane helix</keyword>
<keyword id="KW-0813">Transport</keyword>
<sequence>MNRKITDKLATGMFGLCAAIIAAILVGLFSYIIINGVSQLSFQFITTKSSAIAAGGGIRDQLFNSFYILFITMLITIPLGVGGGVFMAEYAPNNKVTDFIRTCIEVLSSLPSIVIGMFGLLMFVNLTGWGYTIIGGALALTVFNLPVMVRVTEDAIRSVPKDLKEASLALGVSRWHTVKTVLIPSAIPSIITGAILASGRVFGEAAALLFTAGLTTPRLNFTEWNPFSETSPLNIFRPAETLAVHIWNVNTQGMIPDAEAIANGGSAVLVISVLVFNLAARWLGTMIYKKLTAN</sequence>
<dbReference type="EMBL" id="D58414">
    <property type="protein sequence ID" value="BAA09583.1"/>
    <property type="molecule type" value="Genomic_DNA"/>
</dbReference>
<dbReference type="EMBL" id="D84432">
    <property type="protein sequence ID" value="BAA12512.1"/>
    <property type="molecule type" value="Genomic_DNA"/>
</dbReference>
<dbReference type="EMBL" id="AL009126">
    <property type="protein sequence ID" value="CAB14427.2"/>
    <property type="molecule type" value="Genomic_DNA"/>
</dbReference>
<dbReference type="PIR" id="C69956">
    <property type="entry name" value="C69956"/>
</dbReference>
<dbReference type="SMR" id="P46340"/>
<dbReference type="FunCoup" id="P46340">
    <property type="interactions" value="374"/>
</dbReference>
<dbReference type="STRING" id="224308.BSU24970"/>
<dbReference type="PaxDb" id="224308-BSU24970"/>
<dbReference type="EnsemblBacteria" id="CAB14427">
    <property type="protein sequence ID" value="CAB14427"/>
    <property type="gene ID" value="BSU_24970"/>
</dbReference>
<dbReference type="GeneID" id="938200"/>
<dbReference type="KEGG" id="bsu:BSU24970"/>
<dbReference type="PATRIC" id="fig|224308.179.peg.2716"/>
<dbReference type="eggNOG" id="COG0581">
    <property type="taxonomic scope" value="Bacteria"/>
</dbReference>
<dbReference type="InParanoid" id="P46340"/>
<dbReference type="OrthoDB" id="9807065at2"/>
<dbReference type="PhylomeDB" id="P46340"/>
<dbReference type="BioCyc" id="BSUB:BSU24970-MONOMER"/>
<dbReference type="Proteomes" id="UP000001570">
    <property type="component" value="Chromosome"/>
</dbReference>
<dbReference type="GO" id="GO:0005886">
    <property type="term" value="C:plasma membrane"/>
    <property type="evidence" value="ECO:0007669"/>
    <property type="project" value="UniProtKB-SubCell"/>
</dbReference>
<dbReference type="GO" id="GO:0005315">
    <property type="term" value="F:phosphate transmembrane transporter activity"/>
    <property type="evidence" value="ECO:0007669"/>
    <property type="project" value="InterPro"/>
</dbReference>
<dbReference type="GO" id="GO:0035435">
    <property type="term" value="P:phosphate ion transmembrane transport"/>
    <property type="evidence" value="ECO:0007669"/>
    <property type="project" value="InterPro"/>
</dbReference>
<dbReference type="CDD" id="cd06261">
    <property type="entry name" value="TM_PBP2"/>
    <property type="match status" value="1"/>
</dbReference>
<dbReference type="Gene3D" id="1.10.3720.10">
    <property type="entry name" value="MetI-like"/>
    <property type="match status" value="1"/>
</dbReference>
<dbReference type="InterPro" id="IPR000515">
    <property type="entry name" value="MetI-like"/>
</dbReference>
<dbReference type="InterPro" id="IPR035906">
    <property type="entry name" value="MetI-like_sf"/>
</dbReference>
<dbReference type="InterPro" id="IPR005672">
    <property type="entry name" value="Phosphate_PstA"/>
</dbReference>
<dbReference type="NCBIfam" id="TIGR00974">
    <property type="entry name" value="3a0107s02c"/>
    <property type="match status" value="1"/>
</dbReference>
<dbReference type="PANTHER" id="PTHR43470:SF4">
    <property type="entry name" value="ABC TRANSPORTER PERMEASE PROTEIN YQGI-RELATED"/>
    <property type="match status" value="1"/>
</dbReference>
<dbReference type="PANTHER" id="PTHR43470">
    <property type="entry name" value="PHOSPHATE TRANSPORT SYSTEM PERMEASE PROTEIN PSTA-RELATED"/>
    <property type="match status" value="1"/>
</dbReference>
<dbReference type="Pfam" id="PF00528">
    <property type="entry name" value="BPD_transp_1"/>
    <property type="match status" value="1"/>
</dbReference>
<dbReference type="SUPFAM" id="SSF161098">
    <property type="entry name" value="MetI-like"/>
    <property type="match status" value="1"/>
</dbReference>
<dbReference type="PROSITE" id="PS50928">
    <property type="entry name" value="ABC_TM1"/>
    <property type="match status" value="1"/>
</dbReference>